<comment type="function">
    <text evidence="1">Located at the top of the head of the 30S subunit, it contacts several helices of the 16S rRNA. In the 70S ribosome it contacts the 23S rRNA (bridge B1a) and protein L5 of the 50S subunit (bridge B1b), connecting the 2 subunits; these bridges are implicated in subunit movement. Contacts the tRNAs in the A and P-sites.</text>
</comment>
<comment type="subunit">
    <text evidence="1">Part of the 30S ribosomal subunit. Forms a loose heterodimer with protein S19. Forms two bridges to the 50S subunit in the 70S ribosome.</text>
</comment>
<comment type="similarity">
    <text evidence="1">Belongs to the universal ribosomal protein uS13 family.</text>
</comment>
<reference key="1">
    <citation type="journal article" date="2006" name="Appl. Environ. Microbiol.">
        <title>Complete genome sequence of the marine, chemolithoautotrophic, ammonia-oxidizing bacterium Nitrosococcus oceani ATCC 19707.</title>
        <authorList>
            <person name="Klotz M.G."/>
            <person name="Arp D.J."/>
            <person name="Chain P.S.G."/>
            <person name="El-Sheikh A.F."/>
            <person name="Hauser L.J."/>
            <person name="Hommes N.G."/>
            <person name="Larimer F.W."/>
            <person name="Malfatti S.A."/>
            <person name="Norton J.M."/>
            <person name="Poret-Peterson A.T."/>
            <person name="Vergez L.M."/>
            <person name="Ward B.B."/>
        </authorList>
    </citation>
    <scope>NUCLEOTIDE SEQUENCE [LARGE SCALE GENOMIC DNA]</scope>
    <source>
        <strain>ATCC 19707 / BCRC 17464 / JCM 30415 / NCIMB 11848 / C-107</strain>
    </source>
</reference>
<organism>
    <name type="scientific">Nitrosococcus oceani (strain ATCC 19707 / BCRC 17464 / JCM 30415 / NCIMB 11848 / C-107)</name>
    <dbReference type="NCBI Taxonomy" id="323261"/>
    <lineage>
        <taxon>Bacteria</taxon>
        <taxon>Pseudomonadati</taxon>
        <taxon>Pseudomonadota</taxon>
        <taxon>Gammaproteobacteria</taxon>
        <taxon>Chromatiales</taxon>
        <taxon>Chromatiaceae</taxon>
        <taxon>Nitrosococcus</taxon>
    </lineage>
</organism>
<sequence length="118" mass="13254">MARIAGINIPVHKHTVIALSSIYGIGLSRARKICGAVGVPSDKKIRDLSDNELEGLRAEVAKYPVEGDLRREISMDIKRLMDLGCYRGIRHRRGLPVRGQRTQTNARTRKGPRRLARK</sequence>
<proteinExistence type="inferred from homology"/>
<name>RS13_NITOC</name>
<evidence type="ECO:0000255" key="1">
    <source>
        <dbReference type="HAMAP-Rule" id="MF_01315"/>
    </source>
</evidence>
<evidence type="ECO:0000256" key="2">
    <source>
        <dbReference type="SAM" id="MobiDB-lite"/>
    </source>
</evidence>
<evidence type="ECO:0000305" key="3"/>
<accession>Q3J8T5</accession>
<keyword id="KW-1185">Reference proteome</keyword>
<keyword id="KW-0687">Ribonucleoprotein</keyword>
<keyword id="KW-0689">Ribosomal protein</keyword>
<keyword id="KW-0694">RNA-binding</keyword>
<keyword id="KW-0699">rRNA-binding</keyword>
<keyword id="KW-0820">tRNA-binding</keyword>
<protein>
    <recommendedName>
        <fullName evidence="1">Small ribosomal subunit protein uS13</fullName>
    </recommendedName>
    <alternativeName>
        <fullName evidence="3">30S ribosomal protein S13</fullName>
    </alternativeName>
</protein>
<gene>
    <name evidence="1" type="primary">rpsM</name>
    <name type="ordered locus">Noc_2303</name>
</gene>
<feature type="chain" id="PRO_0000230533" description="Small ribosomal subunit protein uS13">
    <location>
        <begin position="1"/>
        <end position="118"/>
    </location>
</feature>
<feature type="region of interest" description="Disordered" evidence="2">
    <location>
        <begin position="94"/>
        <end position="118"/>
    </location>
</feature>
<feature type="compositionally biased region" description="Basic residues" evidence="2">
    <location>
        <begin position="107"/>
        <end position="118"/>
    </location>
</feature>
<dbReference type="EMBL" id="CP000127">
    <property type="protein sequence ID" value="ABA58761.1"/>
    <property type="molecule type" value="Genomic_DNA"/>
</dbReference>
<dbReference type="RefSeq" id="WP_002808993.1">
    <property type="nucleotide sequence ID" value="NC_007484.1"/>
</dbReference>
<dbReference type="SMR" id="Q3J8T5"/>
<dbReference type="FunCoup" id="Q3J8T5">
    <property type="interactions" value="631"/>
</dbReference>
<dbReference type="STRING" id="323261.Noc_2303"/>
<dbReference type="KEGG" id="noc:Noc_2303"/>
<dbReference type="eggNOG" id="COG0099">
    <property type="taxonomic scope" value="Bacteria"/>
</dbReference>
<dbReference type="HOGENOM" id="CLU_103849_1_2_6"/>
<dbReference type="InParanoid" id="Q3J8T5"/>
<dbReference type="Proteomes" id="UP000006838">
    <property type="component" value="Chromosome"/>
</dbReference>
<dbReference type="GO" id="GO:0005829">
    <property type="term" value="C:cytosol"/>
    <property type="evidence" value="ECO:0007669"/>
    <property type="project" value="TreeGrafter"/>
</dbReference>
<dbReference type="GO" id="GO:0015935">
    <property type="term" value="C:small ribosomal subunit"/>
    <property type="evidence" value="ECO:0007669"/>
    <property type="project" value="TreeGrafter"/>
</dbReference>
<dbReference type="GO" id="GO:0019843">
    <property type="term" value="F:rRNA binding"/>
    <property type="evidence" value="ECO:0007669"/>
    <property type="project" value="UniProtKB-UniRule"/>
</dbReference>
<dbReference type="GO" id="GO:0003735">
    <property type="term" value="F:structural constituent of ribosome"/>
    <property type="evidence" value="ECO:0007669"/>
    <property type="project" value="InterPro"/>
</dbReference>
<dbReference type="GO" id="GO:0000049">
    <property type="term" value="F:tRNA binding"/>
    <property type="evidence" value="ECO:0007669"/>
    <property type="project" value="UniProtKB-UniRule"/>
</dbReference>
<dbReference type="GO" id="GO:0006412">
    <property type="term" value="P:translation"/>
    <property type="evidence" value="ECO:0007669"/>
    <property type="project" value="UniProtKB-UniRule"/>
</dbReference>
<dbReference type="FunFam" id="1.10.8.50:FF:000001">
    <property type="entry name" value="30S ribosomal protein S13"/>
    <property type="match status" value="1"/>
</dbReference>
<dbReference type="FunFam" id="4.10.910.10:FF:000001">
    <property type="entry name" value="30S ribosomal protein S13"/>
    <property type="match status" value="1"/>
</dbReference>
<dbReference type="Gene3D" id="1.10.8.50">
    <property type="match status" value="1"/>
</dbReference>
<dbReference type="Gene3D" id="4.10.910.10">
    <property type="entry name" value="30s ribosomal protein s13, domain 2"/>
    <property type="match status" value="1"/>
</dbReference>
<dbReference type="HAMAP" id="MF_01315">
    <property type="entry name" value="Ribosomal_uS13"/>
    <property type="match status" value="1"/>
</dbReference>
<dbReference type="InterPro" id="IPR027437">
    <property type="entry name" value="Rbsml_uS13_C"/>
</dbReference>
<dbReference type="InterPro" id="IPR001892">
    <property type="entry name" value="Ribosomal_uS13"/>
</dbReference>
<dbReference type="InterPro" id="IPR010979">
    <property type="entry name" value="Ribosomal_uS13-like_H2TH"/>
</dbReference>
<dbReference type="InterPro" id="IPR019980">
    <property type="entry name" value="Ribosomal_uS13_bac-type"/>
</dbReference>
<dbReference type="InterPro" id="IPR018269">
    <property type="entry name" value="Ribosomal_uS13_CS"/>
</dbReference>
<dbReference type="NCBIfam" id="TIGR03631">
    <property type="entry name" value="uS13_bact"/>
    <property type="match status" value="1"/>
</dbReference>
<dbReference type="PANTHER" id="PTHR10871">
    <property type="entry name" value="30S RIBOSOMAL PROTEIN S13/40S RIBOSOMAL PROTEIN S18"/>
    <property type="match status" value="1"/>
</dbReference>
<dbReference type="PANTHER" id="PTHR10871:SF1">
    <property type="entry name" value="SMALL RIBOSOMAL SUBUNIT PROTEIN US13M"/>
    <property type="match status" value="1"/>
</dbReference>
<dbReference type="Pfam" id="PF00416">
    <property type="entry name" value="Ribosomal_S13"/>
    <property type="match status" value="1"/>
</dbReference>
<dbReference type="PIRSF" id="PIRSF002134">
    <property type="entry name" value="Ribosomal_S13"/>
    <property type="match status" value="1"/>
</dbReference>
<dbReference type="SUPFAM" id="SSF46946">
    <property type="entry name" value="S13-like H2TH domain"/>
    <property type="match status" value="1"/>
</dbReference>
<dbReference type="PROSITE" id="PS00646">
    <property type="entry name" value="RIBOSOMAL_S13_1"/>
    <property type="match status" value="1"/>
</dbReference>
<dbReference type="PROSITE" id="PS50159">
    <property type="entry name" value="RIBOSOMAL_S13_2"/>
    <property type="match status" value="1"/>
</dbReference>